<proteinExistence type="evidence at transcript level"/>
<accession>Q7T3H7</accession>
<dbReference type="EMBL" id="BC053113">
    <property type="protein sequence ID" value="AAH53113.1"/>
    <property type="molecule type" value="mRNA"/>
</dbReference>
<dbReference type="RefSeq" id="NP_956629.1">
    <property type="nucleotide sequence ID" value="NM_200335.1"/>
</dbReference>
<dbReference type="SMR" id="Q7T3H7"/>
<dbReference type="FunCoup" id="Q7T3H7">
    <property type="interactions" value="1294"/>
</dbReference>
<dbReference type="STRING" id="7955.ENSDARP00000060446"/>
<dbReference type="PaxDb" id="7955-ENSDARP00000060446"/>
<dbReference type="Ensembl" id="ENSDART00000060447">
    <property type="protein sequence ID" value="ENSDARP00000060446"/>
    <property type="gene ID" value="ENSDARG00000041237"/>
</dbReference>
<dbReference type="GeneID" id="393306"/>
<dbReference type="KEGG" id="dre:393306"/>
<dbReference type="AGR" id="ZFIN:ZDB-GENE-040426-1276"/>
<dbReference type="CTD" id="54797"/>
<dbReference type="ZFIN" id="ZDB-GENE-040426-1276">
    <property type="gene designation" value="med18"/>
</dbReference>
<dbReference type="eggNOG" id="KOG3264">
    <property type="taxonomic scope" value="Eukaryota"/>
</dbReference>
<dbReference type="HOGENOM" id="CLU_084570_0_0_1"/>
<dbReference type="InParanoid" id="Q7T3H7"/>
<dbReference type="OMA" id="ARGYMFR"/>
<dbReference type="OrthoDB" id="10018982at2759"/>
<dbReference type="PhylomeDB" id="Q7T3H7"/>
<dbReference type="TreeFam" id="TF313246"/>
<dbReference type="PRO" id="PR:Q7T3H7"/>
<dbReference type="Proteomes" id="UP000000437">
    <property type="component" value="Chromosome 16"/>
</dbReference>
<dbReference type="Bgee" id="ENSDARG00000041237">
    <property type="expression patterns" value="Expressed in mature ovarian follicle and 24 other cell types or tissues"/>
</dbReference>
<dbReference type="GO" id="GO:0070847">
    <property type="term" value="C:core mediator complex"/>
    <property type="evidence" value="ECO:0000318"/>
    <property type="project" value="GO_Central"/>
</dbReference>
<dbReference type="GO" id="GO:0016592">
    <property type="term" value="C:mediator complex"/>
    <property type="evidence" value="ECO:0000318"/>
    <property type="project" value="GO_Central"/>
</dbReference>
<dbReference type="GO" id="GO:0003712">
    <property type="term" value="F:transcription coregulator activity"/>
    <property type="evidence" value="ECO:0000318"/>
    <property type="project" value="GO_Central"/>
</dbReference>
<dbReference type="GO" id="GO:0060261">
    <property type="term" value="P:positive regulation of transcription initiation by RNA polymerase II"/>
    <property type="evidence" value="ECO:0000318"/>
    <property type="project" value="GO_Central"/>
</dbReference>
<dbReference type="FunFam" id="2.40.320.10:FF:000001">
    <property type="entry name" value="Mediator of RNA polymerase II transcription subunit 18"/>
    <property type="match status" value="1"/>
</dbReference>
<dbReference type="Gene3D" id="2.40.320.10">
    <property type="entry name" value="Hypothetical Protein Pfu-838710-001"/>
    <property type="match status" value="1"/>
</dbReference>
<dbReference type="InterPro" id="IPR019095">
    <property type="entry name" value="Mediator_Med18"/>
</dbReference>
<dbReference type="PANTHER" id="PTHR13321:SF2">
    <property type="entry name" value="MEDIATOR OF RNA POLYMERASE II TRANSCRIPTION SUBUNIT 18"/>
    <property type="match status" value="1"/>
</dbReference>
<dbReference type="PANTHER" id="PTHR13321">
    <property type="entry name" value="MEDIATOR OF RNA POLYMERASE II TRANSCRIPTION, SUBUNIT 18"/>
    <property type="match status" value="1"/>
</dbReference>
<dbReference type="Pfam" id="PF09637">
    <property type="entry name" value="Med18"/>
    <property type="match status" value="1"/>
</dbReference>
<protein>
    <recommendedName>
        <fullName>Mediator of RNA polymerase II transcription subunit 18</fullName>
    </recommendedName>
    <alternativeName>
        <fullName>Mediator complex subunit 18</fullName>
    </alternativeName>
</protein>
<keyword id="KW-0010">Activator</keyword>
<keyword id="KW-0539">Nucleus</keyword>
<keyword id="KW-1185">Reference proteome</keyword>
<keyword id="KW-0804">Transcription</keyword>
<keyword id="KW-0805">Transcription regulation</keyword>
<feature type="chain" id="PRO_0000304744" description="Mediator of RNA polymerase II transcription subunit 18">
    <location>
        <begin position="1"/>
        <end position="208"/>
    </location>
</feature>
<comment type="function">
    <text evidence="1">Component of the Mediator complex, a coactivator involved in the regulated transcription of nearly all RNA polymerase II-dependent genes. Mediator functions as a bridge to convey information from gene-specific regulatory proteins to the basal RNA polymerase II transcription machinery. Mediator is recruited to promoters by direct interactions with regulatory proteins and serves as a scaffold for the assembly of a functional preinitiation complex with RNA polymerase II and the general transcription factors (By similarity).</text>
</comment>
<comment type="subunit">
    <text evidence="1">Component of the Mediator complex.</text>
</comment>
<comment type="subcellular location">
    <subcellularLocation>
        <location evidence="2">Nucleus</location>
    </subcellularLocation>
</comment>
<comment type="similarity">
    <text evidence="2">Belongs to the Mediator complex subunit 18 family.</text>
</comment>
<gene>
    <name type="primary">med18</name>
</gene>
<name>MED18_DANRE</name>
<organism>
    <name type="scientific">Danio rerio</name>
    <name type="common">Zebrafish</name>
    <name type="synonym">Brachydanio rerio</name>
    <dbReference type="NCBI Taxonomy" id="7955"/>
    <lineage>
        <taxon>Eukaryota</taxon>
        <taxon>Metazoa</taxon>
        <taxon>Chordata</taxon>
        <taxon>Craniata</taxon>
        <taxon>Vertebrata</taxon>
        <taxon>Euteleostomi</taxon>
        <taxon>Actinopterygii</taxon>
        <taxon>Neopterygii</taxon>
        <taxon>Teleostei</taxon>
        <taxon>Ostariophysi</taxon>
        <taxon>Cypriniformes</taxon>
        <taxon>Danionidae</taxon>
        <taxon>Danioninae</taxon>
        <taxon>Danio</taxon>
    </lineage>
</organism>
<reference key="1">
    <citation type="submission" date="2003-06" db="EMBL/GenBank/DDBJ databases">
        <authorList>
            <consortium name="NIH - Zebrafish Gene Collection (ZGC) project"/>
        </authorList>
    </citation>
    <scope>NUCLEOTIDE SEQUENCE [LARGE SCALE MRNA]</scope>
    <source>
        <tissue>Embryo</tissue>
    </source>
</reference>
<sequence>MEAPPVTVMPVTGGTINMMEYLLQGSVLDQSLESLLHRLRGLCDNMEPESFADHELVYLLKGQQGNPFILRARRSLLDPSVPWHLRYLGQPEVGDKSRHALVRNCVDVAASHSLPDFLNEMGFRMDHEFVAKGQVFRKGVMKVVVSKLSRVLVPGNTDNTEPLSLSYLVELSVLAPAGQDTVSEDMRSFAEQLKPLVHLEKIDPKRLM</sequence>
<evidence type="ECO:0000250" key="1"/>
<evidence type="ECO:0000305" key="2"/>